<dbReference type="EMBL" id="CP000053">
    <property type="protein sequence ID" value="AAY61475.1"/>
    <property type="molecule type" value="Genomic_DNA"/>
</dbReference>
<dbReference type="SMR" id="Q4ULU8"/>
<dbReference type="STRING" id="315456.RF_0624"/>
<dbReference type="KEGG" id="rfe:RF_0624"/>
<dbReference type="eggNOG" id="COG2887">
    <property type="taxonomic scope" value="Bacteria"/>
</dbReference>
<dbReference type="HOGENOM" id="CLU_337988_0_0_5"/>
<dbReference type="OrthoDB" id="9780606at2"/>
<dbReference type="Proteomes" id="UP000008548">
    <property type="component" value="Chromosome"/>
</dbReference>
<dbReference type="Gene3D" id="3.90.320.10">
    <property type="match status" value="1"/>
</dbReference>
<dbReference type="InterPro" id="IPR027417">
    <property type="entry name" value="P-loop_NTPase"/>
</dbReference>
<dbReference type="InterPro" id="IPR011604">
    <property type="entry name" value="PDDEXK-like_dom_sf"/>
</dbReference>
<dbReference type="InterPro" id="IPR038726">
    <property type="entry name" value="PDDEXK_AddAB-type"/>
</dbReference>
<dbReference type="InterPro" id="IPR011335">
    <property type="entry name" value="Restrct_endonuc-II-like"/>
</dbReference>
<dbReference type="InterPro" id="IPR022436">
    <property type="entry name" value="RPE2"/>
</dbReference>
<dbReference type="NCBIfam" id="TIGR03774">
    <property type="entry name" value="RPE2"/>
    <property type="match status" value="1"/>
</dbReference>
<dbReference type="Pfam" id="PF12705">
    <property type="entry name" value="PDDEXK_1"/>
    <property type="match status" value="1"/>
</dbReference>
<dbReference type="SUPFAM" id="SSF52540">
    <property type="entry name" value="P-loop containing nucleoside triphosphate hydrolases"/>
    <property type="match status" value="1"/>
</dbReference>
<dbReference type="SUPFAM" id="SSF52980">
    <property type="entry name" value="Restriction endonuclease-like"/>
    <property type="match status" value="1"/>
</dbReference>
<organism>
    <name type="scientific">Rickettsia felis (strain ATCC VR-1525 / URRWXCal2)</name>
    <name type="common">Rickettsia azadi</name>
    <dbReference type="NCBI Taxonomy" id="315456"/>
    <lineage>
        <taxon>Bacteria</taxon>
        <taxon>Pseudomonadati</taxon>
        <taxon>Pseudomonadota</taxon>
        <taxon>Alphaproteobacteria</taxon>
        <taxon>Rickettsiales</taxon>
        <taxon>Rickettsiaceae</taxon>
        <taxon>Rickettsieae</taxon>
        <taxon>Rickettsia</taxon>
        <taxon>spotted fever group</taxon>
    </lineage>
</organism>
<proteinExistence type="predicted"/>
<protein>
    <recommendedName>
        <fullName>Uncharacterized protein RF_0624</fullName>
    </recommendedName>
</protein>
<sequence length="856" mass="99277">MTADYSFLKSFAEYIIDKLEKGTEVQIILPNNFSCLELKKILTDKYKIKLPIIIPFNSLISKKTDSDYVSKIEELLIISKIITEYKDLQFNKNESLKAAEILRKLINDLIINNIDIKLIEVYNNSNYWQKIYKFLEYCFLRWQEEISLTQKQTKAIHKLKLLQEEIIRIKNKQIILVGMFKPNVFLKRFEEDLKDYIVYYNQTSKQISDGISYYEPNDIYEEAVAIAYICSRNKDKRIAIITNNNKLKRVYCNFLDRYEDLLGNDLRLTNIGELLTSIIKILCNNFDLKLLFLLLKNPLINCSATQKLEVMLSNKNRFISSPKYLLQLQFDNEDTKEYCRNLIDILFTDNPHNILDILTLTKEIAEKLLPTIWEKEGGAELVEFLTNLTAYSKYINSMDKKDFPKIFSFLLSNIKYYKNTDSANIIIAPPEDLALCTFDLIILPHFNNENWTPTAKSHPWLSKKALQILNIDYNETASTLYSDYFNLFLQNKQVIILNAKKYDGKLSVPSNLFLKLQDVIPAVHYVIPAEAGIHLDMDSRRCWNDIRKDDIGDESTAHSHSFPSVLSVTDIETLIRNPYGFYAKKILGLRKKDNIWEEPKISDFGNFIHKVLEEYSKNYDKQFINLNLLDKQNALINIGNHILYGTILPNYTKKTWQIKLTAFSKAFILFDIERRKNCKEIYFETKGELRLNIAGQDIKIIGIADRIEISKSNHITILDYKTGTIPTKKEIELGLSPQLIIESLMLLENGFNIKNENTIVNSVGLGYKARGATPIIIGETTSNDVGKPKSIDYTIAYVKITSTEPYVQTTEIALSIETLNKHKAGLIKLLEYYVTNKSFSYDLNLSKYNDYLHLSR</sequence>
<reference key="1">
    <citation type="journal article" date="2005" name="PLoS Biol.">
        <title>The genome sequence of Rickettsia felis identifies the first putative conjugative plasmid in an obligate intracellular parasite.</title>
        <authorList>
            <person name="Ogata H."/>
            <person name="Renesto P."/>
            <person name="Audic S."/>
            <person name="Robert C."/>
            <person name="Blanc G."/>
            <person name="Fournier P.-E."/>
            <person name="Parinello H."/>
            <person name="Claverie J.-M."/>
            <person name="Raoult D."/>
        </authorList>
    </citation>
    <scope>NUCLEOTIDE SEQUENCE [LARGE SCALE GENOMIC DNA]</scope>
    <source>
        <strain>ATCC VR-1525 / URRWXCal2</strain>
    </source>
</reference>
<gene>
    <name type="ordered locus">RF_0624</name>
</gene>
<feature type="chain" id="PRO_0000280806" description="Uncharacterized protein RF_0624">
    <location>
        <begin position="1"/>
        <end position="856"/>
    </location>
</feature>
<name>Y624_RICFE</name>
<accession>Q4ULU8</accession>